<name>AROB_LISMH</name>
<accession>B8DBZ9</accession>
<protein>
    <recommendedName>
        <fullName evidence="1">3-dehydroquinate synthase</fullName>
        <shortName evidence="1">DHQS</shortName>
        <ecNumber evidence="1">4.2.3.4</ecNumber>
    </recommendedName>
</protein>
<keyword id="KW-0028">Amino-acid biosynthesis</keyword>
<keyword id="KW-0057">Aromatic amino acid biosynthesis</keyword>
<keyword id="KW-0170">Cobalt</keyword>
<keyword id="KW-0963">Cytoplasm</keyword>
<keyword id="KW-0456">Lyase</keyword>
<keyword id="KW-0479">Metal-binding</keyword>
<keyword id="KW-0520">NAD</keyword>
<keyword id="KW-0547">Nucleotide-binding</keyword>
<keyword id="KW-0862">Zinc</keyword>
<proteinExistence type="inferred from homology"/>
<comment type="function">
    <text evidence="1">Catalyzes the conversion of 3-deoxy-D-arabino-heptulosonate 7-phosphate (DAHP) to dehydroquinate (DHQ).</text>
</comment>
<comment type="catalytic activity">
    <reaction evidence="1">
        <text>7-phospho-2-dehydro-3-deoxy-D-arabino-heptonate = 3-dehydroquinate + phosphate</text>
        <dbReference type="Rhea" id="RHEA:21968"/>
        <dbReference type="ChEBI" id="CHEBI:32364"/>
        <dbReference type="ChEBI" id="CHEBI:43474"/>
        <dbReference type="ChEBI" id="CHEBI:58394"/>
        <dbReference type="EC" id="4.2.3.4"/>
    </reaction>
</comment>
<comment type="cofactor">
    <cofactor evidence="1">
        <name>Co(2+)</name>
        <dbReference type="ChEBI" id="CHEBI:48828"/>
    </cofactor>
    <cofactor evidence="1">
        <name>Zn(2+)</name>
        <dbReference type="ChEBI" id="CHEBI:29105"/>
    </cofactor>
    <text evidence="1">Binds 1 divalent metal cation per subunit. Can use either Co(2+) or Zn(2+).</text>
</comment>
<comment type="cofactor">
    <cofactor evidence="1">
        <name>NAD(+)</name>
        <dbReference type="ChEBI" id="CHEBI:57540"/>
    </cofactor>
</comment>
<comment type="pathway">
    <text evidence="1">Metabolic intermediate biosynthesis; chorismate biosynthesis; chorismate from D-erythrose 4-phosphate and phosphoenolpyruvate: step 2/7.</text>
</comment>
<comment type="subcellular location">
    <subcellularLocation>
        <location evidence="1">Cytoplasm</location>
    </subcellularLocation>
</comment>
<comment type="similarity">
    <text evidence="1">Belongs to the sugar phosphate cyclases superfamily. Dehydroquinate synthase family.</text>
</comment>
<evidence type="ECO:0000255" key="1">
    <source>
        <dbReference type="HAMAP-Rule" id="MF_00110"/>
    </source>
</evidence>
<dbReference type="EC" id="4.2.3.4" evidence="1"/>
<dbReference type="EMBL" id="CP001175">
    <property type="protein sequence ID" value="ACK38985.1"/>
    <property type="molecule type" value="Genomic_DNA"/>
</dbReference>
<dbReference type="RefSeq" id="WP_012581062.1">
    <property type="nucleotide sequence ID" value="NC_011660.1"/>
</dbReference>
<dbReference type="SMR" id="B8DBZ9"/>
<dbReference type="KEGG" id="lmh:LMHCC_0629"/>
<dbReference type="HOGENOM" id="CLU_001201_0_1_9"/>
<dbReference type="UniPathway" id="UPA00053">
    <property type="reaction ID" value="UER00085"/>
</dbReference>
<dbReference type="GO" id="GO:0005737">
    <property type="term" value="C:cytoplasm"/>
    <property type="evidence" value="ECO:0007669"/>
    <property type="project" value="UniProtKB-SubCell"/>
</dbReference>
<dbReference type="GO" id="GO:0003856">
    <property type="term" value="F:3-dehydroquinate synthase activity"/>
    <property type="evidence" value="ECO:0007669"/>
    <property type="project" value="UniProtKB-UniRule"/>
</dbReference>
<dbReference type="GO" id="GO:0046872">
    <property type="term" value="F:metal ion binding"/>
    <property type="evidence" value="ECO:0007669"/>
    <property type="project" value="UniProtKB-KW"/>
</dbReference>
<dbReference type="GO" id="GO:0000166">
    <property type="term" value="F:nucleotide binding"/>
    <property type="evidence" value="ECO:0007669"/>
    <property type="project" value="UniProtKB-KW"/>
</dbReference>
<dbReference type="GO" id="GO:0008652">
    <property type="term" value="P:amino acid biosynthetic process"/>
    <property type="evidence" value="ECO:0007669"/>
    <property type="project" value="UniProtKB-KW"/>
</dbReference>
<dbReference type="GO" id="GO:0009073">
    <property type="term" value="P:aromatic amino acid family biosynthetic process"/>
    <property type="evidence" value="ECO:0007669"/>
    <property type="project" value="UniProtKB-KW"/>
</dbReference>
<dbReference type="GO" id="GO:0009423">
    <property type="term" value="P:chorismate biosynthetic process"/>
    <property type="evidence" value="ECO:0007669"/>
    <property type="project" value="UniProtKB-UniRule"/>
</dbReference>
<dbReference type="CDD" id="cd08195">
    <property type="entry name" value="DHQS"/>
    <property type="match status" value="1"/>
</dbReference>
<dbReference type="FunFam" id="1.20.1090.10:FF:000019">
    <property type="entry name" value="3-dehydroquinate synthase"/>
    <property type="match status" value="1"/>
</dbReference>
<dbReference type="FunFam" id="3.40.50.1970:FF:000026">
    <property type="entry name" value="3-dehydroquinate synthase"/>
    <property type="match status" value="1"/>
</dbReference>
<dbReference type="Gene3D" id="3.40.50.1970">
    <property type="match status" value="1"/>
</dbReference>
<dbReference type="Gene3D" id="1.20.1090.10">
    <property type="entry name" value="Dehydroquinate synthase-like - alpha domain"/>
    <property type="match status" value="1"/>
</dbReference>
<dbReference type="HAMAP" id="MF_00110">
    <property type="entry name" value="DHQ_synthase"/>
    <property type="match status" value="1"/>
</dbReference>
<dbReference type="InterPro" id="IPR050071">
    <property type="entry name" value="Dehydroquinate_synthase"/>
</dbReference>
<dbReference type="InterPro" id="IPR016037">
    <property type="entry name" value="DHQ_synth_AroB"/>
</dbReference>
<dbReference type="InterPro" id="IPR030963">
    <property type="entry name" value="DHQ_synth_fam"/>
</dbReference>
<dbReference type="InterPro" id="IPR030960">
    <property type="entry name" value="DHQS/DOIS_N"/>
</dbReference>
<dbReference type="InterPro" id="IPR056179">
    <property type="entry name" value="DHQS_C"/>
</dbReference>
<dbReference type="NCBIfam" id="TIGR01357">
    <property type="entry name" value="aroB"/>
    <property type="match status" value="1"/>
</dbReference>
<dbReference type="PANTHER" id="PTHR43622">
    <property type="entry name" value="3-DEHYDROQUINATE SYNTHASE"/>
    <property type="match status" value="1"/>
</dbReference>
<dbReference type="PANTHER" id="PTHR43622:SF7">
    <property type="entry name" value="3-DEHYDROQUINATE SYNTHASE, CHLOROPLASTIC"/>
    <property type="match status" value="1"/>
</dbReference>
<dbReference type="Pfam" id="PF01761">
    <property type="entry name" value="DHQ_synthase"/>
    <property type="match status" value="1"/>
</dbReference>
<dbReference type="Pfam" id="PF24621">
    <property type="entry name" value="DHQS_C"/>
    <property type="match status" value="1"/>
</dbReference>
<dbReference type="PIRSF" id="PIRSF001455">
    <property type="entry name" value="DHQ_synth"/>
    <property type="match status" value="1"/>
</dbReference>
<dbReference type="SUPFAM" id="SSF56796">
    <property type="entry name" value="Dehydroquinate synthase-like"/>
    <property type="match status" value="1"/>
</dbReference>
<sequence length="365" mass="41142">MPEITVRAKSKTYPVYINEFALEDVREKWTESLAKFSHVFVLTDEHVAELHKAKLDAVLADLPVVTYYVAPNGEEAKTFRVYEDVMTKLIETGLDRKAVLIAFGGGVIGDLGGFVAATYMRGIPFYQVPTTVLAHDSAVGGKVAINHPLGKNMIGNFYQPEAVIYDTQFFATLPEREMRSGFAEMIKHALISDQTLLRALMDTFTEPKDFYTKDLTPFLQRGIEIKANIVAQDETEQGVRAYLNFGHTFGHALEAYGNFGKWLHGEAITYGMIYALTMSEAIYGLDFDLAEFKTWLKQLGYDTTFDATVPFSKILENMRHDKKTTFNEISMVLLEEIGKPVIFKAEDDLIFETYKRVMRNGGNGI</sequence>
<feature type="chain" id="PRO_1000119084" description="3-dehydroquinate synthase">
    <location>
        <begin position="1"/>
        <end position="365"/>
    </location>
</feature>
<feature type="binding site" evidence="1">
    <location>
        <begin position="106"/>
        <end position="110"/>
    </location>
    <ligand>
        <name>NAD(+)</name>
        <dbReference type="ChEBI" id="CHEBI:57540"/>
    </ligand>
</feature>
<feature type="binding site" evidence="1">
    <location>
        <begin position="130"/>
        <end position="131"/>
    </location>
    <ligand>
        <name>NAD(+)</name>
        <dbReference type="ChEBI" id="CHEBI:57540"/>
    </ligand>
</feature>
<feature type="binding site" evidence="1">
    <location>
        <position position="142"/>
    </location>
    <ligand>
        <name>NAD(+)</name>
        <dbReference type="ChEBI" id="CHEBI:57540"/>
    </ligand>
</feature>
<feature type="binding site" evidence="1">
    <location>
        <position position="151"/>
    </location>
    <ligand>
        <name>NAD(+)</name>
        <dbReference type="ChEBI" id="CHEBI:57540"/>
    </ligand>
</feature>
<feature type="binding site" evidence="1">
    <location>
        <begin position="169"/>
        <end position="172"/>
    </location>
    <ligand>
        <name>NAD(+)</name>
        <dbReference type="ChEBI" id="CHEBI:57540"/>
    </ligand>
</feature>
<feature type="binding site" evidence="1">
    <location>
        <position position="184"/>
    </location>
    <ligand>
        <name>Zn(2+)</name>
        <dbReference type="ChEBI" id="CHEBI:29105"/>
    </ligand>
</feature>
<feature type="binding site" evidence="1">
    <location>
        <position position="247"/>
    </location>
    <ligand>
        <name>Zn(2+)</name>
        <dbReference type="ChEBI" id="CHEBI:29105"/>
    </ligand>
</feature>
<feature type="binding site" evidence="1">
    <location>
        <position position="264"/>
    </location>
    <ligand>
        <name>Zn(2+)</name>
        <dbReference type="ChEBI" id="CHEBI:29105"/>
    </ligand>
</feature>
<organism>
    <name type="scientific">Listeria monocytogenes serotype 4a (strain HCC23)</name>
    <dbReference type="NCBI Taxonomy" id="552536"/>
    <lineage>
        <taxon>Bacteria</taxon>
        <taxon>Bacillati</taxon>
        <taxon>Bacillota</taxon>
        <taxon>Bacilli</taxon>
        <taxon>Bacillales</taxon>
        <taxon>Listeriaceae</taxon>
        <taxon>Listeria</taxon>
    </lineage>
</organism>
<gene>
    <name evidence="1" type="primary">aroB</name>
    <name type="ordered locus">LMHCC_0629</name>
</gene>
<reference key="1">
    <citation type="journal article" date="2011" name="J. Bacteriol.">
        <title>Genome sequence of lineage III Listeria monocytogenes strain HCC23.</title>
        <authorList>
            <person name="Steele C.L."/>
            <person name="Donaldson J.R."/>
            <person name="Paul D."/>
            <person name="Banes M.M."/>
            <person name="Arick T."/>
            <person name="Bridges S.M."/>
            <person name="Lawrence M.L."/>
        </authorList>
    </citation>
    <scope>NUCLEOTIDE SEQUENCE [LARGE SCALE GENOMIC DNA]</scope>
    <source>
        <strain>HCC23</strain>
    </source>
</reference>